<name>SIRB2_ECOLI</name>
<protein>
    <recommendedName>
        <fullName>Protein YchQ</fullName>
    </recommendedName>
    <alternativeName>
        <fullName>Protein SirB2</fullName>
    </alternativeName>
</protein>
<sequence length="130" mass="14639">MTSFSTLLSVHLISIALSVGLLTLRFWLRYQKHPQAFARWTRIVPPVVDTLLLLSGIALMAKAHILPFSGQAQWLTEKLFGVIIYIVLGFIALDYRRMHSQQARIIAFPLALVVLYIIIKLATTKVPLLG</sequence>
<comment type="subcellular location">
    <subcellularLocation>
        <location evidence="2">Cell inner membrane</location>
        <topology evidence="4">Multi-pass membrane protein</topology>
    </subcellularLocation>
</comment>
<comment type="similarity">
    <text evidence="3">Belongs to the SirB2 family.</text>
</comment>
<evidence type="ECO:0000255" key="1"/>
<evidence type="ECO:0000269" key="2">
    <source>
    </source>
</evidence>
<evidence type="ECO:0000305" key="3"/>
<evidence type="ECO:0000305" key="4">
    <source>
    </source>
</evidence>
<accession>Q46755</accession>
<reference key="1">
    <citation type="journal article" date="1995" name="J. Bacteriol.">
        <title>Expression of genes kdsA and kdsB involved in 3-deoxy-D-manno-octulosonic acid metabolism and biosynthesis of enterobacterial lipopolysaccharide is growth phase regulated primarily at the transcriptional level in Escherichia coli K-12.</title>
        <authorList>
            <person name="Strohmaier H."/>
            <person name="Remler P."/>
            <person name="Renner W."/>
            <person name="Hoegenauer G."/>
        </authorList>
    </citation>
    <scope>NUCLEOTIDE SEQUENCE [GENOMIC DNA]</scope>
</reference>
<reference key="2">
    <citation type="journal article" date="1996" name="DNA Res.">
        <title>A 718-kb DNA sequence of the Escherichia coli K-12 genome corresponding to the 12.7-28.0 min region on the linkage map.</title>
        <authorList>
            <person name="Oshima T."/>
            <person name="Aiba H."/>
            <person name="Baba T."/>
            <person name="Fujita K."/>
            <person name="Hayashi K."/>
            <person name="Honjo A."/>
            <person name="Ikemoto K."/>
            <person name="Inada T."/>
            <person name="Itoh T."/>
            <person name="Kajihara M."/>
            <person name="Kanai K."/>
            <person name="Kashimoto K."/>
            <person name="Kimura S."/>
            <person name="Kitagawa M."/>
            <person name="Makino K."/>
            <person name="Masuda S."/>
            <person name="Miki T."/>
            <person name="Mizobuchi K."/>
            <person name="Mori H."/>
            <person name="Motomura K."/>
            <person name="Nakamura Y."/>
            <person name="Nashimoto H."/>
            <person name="Nishio Y."/>
            <person name="Saito N."/>
            <person name="Sampei G."/>
            <person name="Seki Y."/>
            <person name="Tagami H."/>
            <person name="Takemoto K."/>
            <person name="Wada C."/>
            <person name="Yamamoto Y."/>
            <person name="Yano M."/>
            <person name="Horiuchi T."/>
        </authorList>
    </citation>
    <scope>NUCLEOTIDE SEQUENCE [LARGE SCALE GENOMIC DNA]</scope>
    <source>
        <strain>K12 / W3110 / ATCC 27325 / DSM 5911</strain>
    </source>
</reference>
<reference key="3">
    <citation type="journal article" date="1997" name="Science">
        <title>The complete genome sequence of Escherichia coli K-12.</title>
        <authorList>
            <person name="Blattner F.R."/>
            <person name="Plunkett G. III"/>
            <person name="Bloch C.A."/>
            <person name="Perna N.T."/>
            <person name="Burland V."/>
            <person name="Riley M."/>
            <person name="Collado-Vides J."/>
            <person name="Glasner J.D."/>
            <person name="Rode C.K."/>
            <person name="Mayhew G.F."/>
            <person name="Gregor J."/>
            <person name="Davis N.W."/>
            <person name="Kirkpatrick H.A."/>
            <person name="Goeden M.A."/>
            <person name="Rose D.J."/>
            <person name="Mau B."/>
            <person name="Shao Y."/>
        </authorList>
    </citation>
    <scope>NUCLEOTIDE SEQUENCE [LARGE SCALE GENOMIC DNA]</scope>
    <source>
        <strain>K12 / MG1655 / ATCC 47076</strain>
    </source>
</reference>
<reference key="4">
    <citation type="journal article" date="2006" name="Mol. Syst. Biol.">
        <title>Highly accurate genome sequences of Escherichia coli K-12 strains MG1655 and W3110.</title>
        <authorList>
            <person name="Hayashi K."/>
            <person name="Morooka N."/>
            <person name="Yamamoto Y."/>
            <person name="Fujita K."/>
            <person name="Isono K."/>
            <person name="Choi S."/>
            <person name="Ohtsubo E."/>
            <person name="Baba T."/>
            <person name="Wanner B.L."/>
            <person name="Mori H."/>
            <person name="Horiuchi T."/>
        </authorList>
    </citation>
    <scope>NUCLEOTIDE SEQUENCE [LARGE SCALE GENOMIC DNA]</scope>
    <source>
        <strain>K12 / W3110 / ATCC 27325 / DSM 5911</strain>
    </source>
</reference>
<reference key="5">
    <citation type="journal article" date="2005" name="Science">
        <title>Global topology analysis of the Escherichia coli inner membrane proteome.</title>
        <authorList>
            <person name="Daley D.O."/>
            <person name="Rapp M."/>
            <person name="Granseth E."/>
            <person name="Melen K."/>
            <person name="Drew D."/>
            <person name="von Heijne G."/>
        </authorList>
    </citation>
    <scope>SUBCELLULAR LOCATION</scope>
    <scope>TOPOLOGY [LARGE SCALE ANALYSIS]</scope>
    <source>
        <strain>K12 / MG1655 / ATCC 47076</strain>
    </source>
</reference>
<gene>
    <name type="primary">ychQ</name>
    <name type="synonym">sirB2</name>
    <name type="ordered locus">b1213</name>
    <name type="ordered locus">JW1204</name>
</gene>
<keyword id="KW-0997">Cell inner membrane</keyword>
<keyword id="KW-1003">Cell membrane</keyword>
<keyword id="KW-0472">Membrane</keyword>
<keyword id="KW-1185">Reference proteome</keyword>
<keyword id="KW-0812">Transmembrane</keyword>
<keyword id="KW-1133">Transmembrane helix</keyword>
<feature type="chain" id="PRO_0000097770" description="Protein YchQ">
    <location>
        <begin position="1"/>
        <end position="130"/>
    </location>
</feature>
<feature type="topological domain" description="Periplasmic" evidence="1">
    <location>
        <begin position="1"/>
        <end position="9"/>
    </location>
</feature>
<feature type="transmembrane region" description="Helical" evidence="1">
    <location>
        <begin position="10"/>
        <end position="28"/>
    </location>
</feature>
<feature type="topological domain" description="Cytoplasmic" evidence="1">
    <location>
        <begin position="29"/>
        <end position="39"/>
    </location>
</feature>
<feature type="transmembrane region" description="Helical" evidence="1">
    <location>
        <begin position="40"/>
        <end position="59"/>
    </location>
</feature>
<feature type="topological domain" description="Periplasmic" evidence="1">
    <location>
        <begin position="60"/>
        <end position="73"/>
    </location>
</feature>
<feature type="transmembrane region" description="Helical" evidence="1">
    <location>
        <begin position="74"/>
        <end position="93"/>
    </location>
</feature>
<feature type="topological domain" description="Cytoplasmic" evidence="1">
    <location>
        <begin position="94"/>
        <end position="104"/>
    </location>
</feature>
<feature type="transmembrane region" description="Helical" evidence="1">
    <location>
        <begin position="105"/>
        <end position="124"/>
    </location>
</feature>
<feature type="topological domain" description="Periplasmic" evidence="1 2">
    <location>
        <begin position="125"/>
        <end position="130"/>
    </location>
</feature>
<dbReference type="EMBL" id="U18555">
    <property type="protein sequence ID" value="AAC43439.1"/>
    <property type="molecule type" value="Genomic_DNA"/>
</dbReference>
<dbReference type="EMBL" id="U00096">
    <property type="protein sequence ID" value="AAC74297.1"/>
    <property type="molecule type" value="Genomic_DNA"/>
</dbReference>
<dbReference type="EMBL" id="AP009048">
    <property type="protein sequence ID" value="BAA36071.1"/>
    <property type="molecule type" value="Genomic_DNA"/>
</dbReference>
<dbReference type="PIR" id="I83571">
    <property type="entry name" value="I83571"/>
</dbReference>
<dbReference type="RefSeq" id="NP_415731.1">
    <property type="nucleotide sequence ID" value="NC_000913.3"/>
</dbReference>
<dbReference type="RefSeq" id="WP_000200374.1">
    <property type="nucleotide sequence ID" value="NZ_SSZK01000010.1"/>
</dbReference>
<dbReference type="SMR" id="Q46755"/>
<dbReference type="BioGRID" id="4263203">
    <property type="interactions" value="10"/>
</dbReference>
<dbReference type="FunCoup" id="Q46755">
    <property type="interactions" value="49"/>
</dbReference>
<dbReference type="IntAct" id="Q46755">
    <property type="interactions" value="1"/>
</dbReference>
<dbReference type="STRING" id="511145.b1213"/>
<dbReference type="PaxDb" id="511145-b1213"/>
<dbReference type="EnsemblBacteria" id="AAC74297">
    <property type="protein sequence ID" value="AAC74297"/>
    <property type="gene ID" value="b1213"/>
</dbReference>
<dbReference type="GeneID" id="945781"/>
<dbReference type="KEGG" id="ecj:JW1204"/>
<dbReference type="KEGG" id="eco:b1213"/>
<dbReference type="KEGG" id="ecoc:C3026_07125"/>
<dbReference type="PATRIC" id="fig|1411691.4.peg.1071"/>
<dbReference type="EchoBASE" id="EB4041"/>
<dbReference type="eggNOG" id="COG3094">
    <property type="taxonomic scope" value="Bacteria"/>
</dbReference>
<dbReference type="HOGENOM" id="CLU_123860_3_0_6"/>
<dbReference type="InParanoid" id="Q46755"/>
<dbReference type="OMA" id="LKVFPHI"/>
<dbReference type="OrthoDB" id="5588650at2"/>
<dbReference type="PhylomeDB" id="Q46755"/>
<dbReference type="BioCyc" id="EcoCyc:G6630-MONOMER"/>
<dbReference type="PRO" id="PR:Q46755"/>
<dbReference type="Proteomes" id="UP000000625">
    <property type="component" value="Chromosome"/>
</dbReference>
<dbReference type="GO" id="GO:0005886">
    <property type="term" value="C:plasma membrane"/>
    <property type="evidence" value="ECO:0000314"/>
    <property type="project" value="EcoCyc"/>
</dbReference>
<dbReference type="InterPro" id="IPR007360">
    <property type="entry name" value="SirB"/>
</dbReference>
<dbReference type="NCBIfam" id="NF007622">
    <property type="entry name" value="PRK10278.1"/>
    <property type="match status" value="1"/>
</dbReference>
<dbReference type="PANTHER" id="PTHR39594">
    <property type="entry name" value="PROTEIN YCHQ"/>
    <property type="match status" value="1"/>
</dbReference>
<dbReference type="PANTHER" id="PTHR39594:SF1">
    <property type="entry name" value="PROTEIN YCHQ"/>
    <property type="match status" value="1"/>
</dbReference>
<dbReference type="Pfam" id="PF04247">
    <property type="entry name" value="SirB"/>
    <property type="match status" value="1"/>
</dbReference>
<dbReference type="PIRSF" id="PIRSF005610">
    <property type="entry name" value="SirB"/>
    <property type="match status" value="1"/>
</dbReference>
<proteinExistence type="evidence at protein level"/>
<organism>
    <name type="scientific">Escherichia coli (strain K12)</name>
    <dbReference type="NCBI Taxonomy" id="83333"/>
    <lineage>
        <taxon>Bacteria</taxon>
        <taxon>Pseudomonadati</taxon>
        <taxon>Pseudomonadota</taxon>
        <taxon>Gammaproteobacteria</taxon>
        <taxon>Enterobacterales</taxon>
        <taxon>Enterobacteriaceae</taxon>
        <taxon>Escherichia</taxon>
    </lineage>
</organism>